<sequence length="384" mass="42887">MSKFPEKGLPREEVLNLLEDKTKVDLTFSSGKILGSMCTMPHELAIEVFARYIDRNLGDPGLHPGTRKIEEEVIEMLSDLLHLEKGYGHIVSGGTEANILAVRAFRNISDAERPELILPKSAHFSFIKAGEMLGVKLVWAELKQDYAVDVKDVEAKISDNTIGIVGIAGTTGLGVVDDIPALSDLAREYGIPLHVDAAFGGFVIPFAKSLGYDLPDFDFKLKGVESITIDPHKMGMAPIPAGGIIFRRKKYLKAISVLAPYLAGGKVWQATITGTRPGASVLAVWALIKHLGFEGYREIVRKAMELSRWFAEEIKKLNNAWLVREPMLNIVSFQTKNLRKVERELKRRGWGISAHRGYIRIVFMPHVTKEMVEEFLRDLREVLK</sequence>
<protein>
    <recommendedName>
        <fullName evidence="1">Probable L-aspartate decarboxylase</fullName>
        <shortName evidence="1">ADC</shortName>
        <ecNumber evidence="1">4.1.1.11</ecNumber>
    </recommendedName>
</protein>
<name>MFNA_PYRAB</name>
<feature type="chain" id="PRO_0000147028" description="Probable L-aspartate decarboxylase">
    <location>
        <begin position="1"/>
        <end position="384"/>
    </location>
</feature>
<feature type="modified residue" description="N6-(pyridoxal phosphate)lysine" evidence="1">
    <location>
        <position position="233"/>
    </location>
</feature>
<accession>Q9UZD5</accession>
<accession>G8ZKK6</accession>
<gene>
    <name evidence="1" type="primary">mfnA</name>
    <name type="ordered locus">PYRAB12130</name>
    <name type="ORF">PAB1578</name>
</gene>
<reference key="1">
    <citation type="journal article" date="2003" name="Mol. Microbiol.">
        <title>An integrated analysis of the genome of the hyperthermophilic archaeon Pyrococcus abyssi.</title>
        <authorList>
            <person name="Cohen G.N."/>
            <person name="Barbe V."/>
            <person name="Flament D."/>
            <person name="Galperin M."/>
            <person name="Heilig R."/>
            <person name="Lecompte O."/>
            <person name="Poch O."/>
            <person name="Prieur D."/>
            <person name="Querellou J."/>
            <person name="Ripp R."/>
            <person name="Thierry J.-C."/>
            <person name="Van der Oost J."/>
            <person name="Weissenbach J."/>
            <person name="Zivanovic Y."/>
            <person name="Forterre P."/>
        </authorList>
    </citation>
    <scope>NUCLEOTIDE SEQUENCE [LARGE SCALE GENOMIC DNA]</scope>
    <source>
        <strain>GE5 / Orsay</strain>
    </source>
</reference>
<reference key="2">
    <citation type="journal article" date="2012" name="Curr. Microbiol.">
        <title>Re-annotation of two hyperthermophilic archaea Pyrococcus abyssi GE5 and Pyrococcus furiosus DSM 3638.</title>
        <authorList>
            <person name="Gao J."/>
            <person name="Wang J."/>
        </authorList>
    </citation>
    <scope>GENOME REANNOTATION</scope>
    <source>
        <strain>GE5 / Orsay</strain>
    </source>
</reference>
<proteinExistence type="inferred from homology"/>
<keyword id="KW-0210">Decarboxylase</keyword>
<keyword id="KW-0456">Lyase</keyword>
<keyword id="KW-0663">Pyridoxal phosphate</keyword>
<evidence type="ECO:0000255" key="1">
    <source>
        <dbReference type="HAMAP-Rule" id="MF_01610"/>
    </source>
</evidence>
<organism>
    <name type="scientific">Pyrococcus abyssi (strain GE5 / Orsay)</name>
    <dbReference type="NCBI Taxonomy" id="272844"/>
    <lineage>
        <taxon>Archaea</taxon>
        <taxon>Methanobacteriati</taxon>
        <taxon>Methanobacteriota</taxon>
        <taxon>Thermococci</taxon>
        <taxon>Thermococcales</taxon>
        <taxon>Thermococcaceae</taxon>
        <taxon>Pyrococcus</taxon>
    </lineage>
</organism>
<comment type="function">
    <text evidence="1">Catalyzes the decarboxylation of L-aspartate to produce beta-alanine.</text>
</comment>
<comment type="catalytic activity">
    <reaction evidence="1">
        <text>L-aspartate + H(+) = beta-alanine + CO2</text>
        <dbReference type="Rhea" id="RHEA:19497"/>
        <dbReference type="ChEBI" id="CHEBI:15378"/>
        <dbReference type="ChEBI" id="CHEBI:16526"/>
        <dbReference type="ChEBI" id="CHEBI:29991"/>
        <dbReference type="ChEBI" id="CHEBI:57966"/>
        <dbReference type="EC" id="4.1.1.11"/>
    </reaction>
</comment>
<comment type="cofactor">
    <cofactor evidence="1">
        <name>pyridoxal 5'-phosphate</name>
        <dbReference type="ChEBI" id="CHEBI:597326"/>
    </cofactor>
</comment>
<comment type="pathway">
    <text evidence="1">Cofactor biosynthesis; coenzyme A biosynthesis.</text>
</comment>
<comment type="similarity">
    <text evidence="1">Belongs to the group II decarboxylase family. MfnA subfamily.</text>
</comment>
<dbReference type="EC" id="4.1.1.11" evidence="1"/>
<dbReference type="EMBL" id="AJ248286">
    <property type="protein sequence ID" value="CAB50124.1"/>
    <property type="molecule type" value="Genomic_DNA"/>
</dbReference>
<dbReference type="EMBL" id="HE613800">
    <property type="protein sequence ID" value="CCE70649.1"/>
    <property type="molecule type" value="Genomic_DNA"/>
</dbReference>
<dbReference type="PIR" id="G75102">
    <property type="entry name" value="G75102"/>
</dbReference>
<dbReference type="RefSeq" id="WP_010868331.1">
    <property type="nucleotide sequence ID" value="NC_000868.1"/>
</dbReference>
<dbReference type="SMR" id="Q9UZD5"/>
<dbReference type="STRING" id="272844.PAB1578"/>
<dbReference type="KEGG" id="pab:PAB1578"/>
<dbReference type="PATRIC" id="fig|272844.11.peg.1293"/>
<dbReference type="eggNOG" id="arCOG00027">
    <property type="taxonomic scope" value="Archaea"/>
</dbReference>
<dbReference type="HOGENOM" id="CLU_028929_2_1_2"/>
<dbReference type="OrthoDB" id="56891at2157"/>
<dbReference type="PhylomeDB" id="Q9UZD5"/>
<dbReference type="UniPathway" id="UPA00241"/>
<dbReference type="Proteomes" id="UP000000810">
    <property type="component" value="Chromosome"/>
</dbReference>
<dbReference type="Proteomes" id="UP000009139">
    <property type="component" value="Chromosome"/>
</dbReference>
<dbReference type="GO" id="GO:0004068">
    <property type="term" value="F:aspartate 1-decarboxylase activity"/>
    <property type="evidence" value="ECO:0007669"/>
    <property type="project" value="UniProtKB-UniRule"/>
</dbReference>
<dbReference type="GO" id="GO:0030170">
    <property type="term" value="F:pyridoxal phosphate binding"/>
    <property type="evidence" value="ECO:0007669"/>
    <property type="project" value="UniProtKB-UniRule"/>
</dbReference>
<dbReference type="GO" id="GO:0019752">
    <property type="term" value="P:carboxylic acid metabolic process"/>
    <property type="evidence" value="ECO:0007669"/>
    <property type="project" value="InterPro"/>
</dbReference>
<dbReference type="GO" id="GO:0015937">
    <property type="term" value="P:coenzyme A biosynthetic process"/>
    <property type="evidence" value="ECO:0007669"/>
    <property type="project" value="UniProtKB-UniRule"/>
</dbReference>
<dbReference type="FunFam" id="3.40.640.10:FF:000125">
    <property type="entry name" value="Probable L-tyrosine/L-aspartate decarboxylase"/>
    <property type="match status" value="1"/>
</dbReference>
<dbReference type="Gene3D" id="3.90.1150.10">
    <property type="entry name" value="Aspartate Aminotransferase, domain 1"/>
    <property type="match status" value="1"/>
</dbReference>
<dbReference type="Gene3D" id="3.40.640.10">
    <property type="entry name" value="Type I PLP-dependent aspartate aminotransferase-like (Major domain)"/>
    <property type="match status" value="1"/>
</dbReference>
<dbReference type="HAMAP" id="MF_01610">
    <property type="entry name" value="MfnA_decarbox"/>
    <property type="match status" value="1"/>
</dbReference>
<dbReference type="InterPro" id="IPR050477">
    <property type="entry name" value="GrpII_AminoAcid_Decarb"/>
</dbReference>
<dbReference type="InterPro" id="IPR020931">
    <property type="entry name" value="MfnA"/>
</dbReference>
<dbReference type="InterPro" id="IPR002129">
    <property type="entry name" value="PyrdxlP-dep_de-COase"/>
</dbReference>
<dbReference type="InterPro" id="IPR015424">
    <property type="entry name" value="PyrdxlP-dep_Trfase"/>
</dbReference>
<dbReference type="InterPro" id="IPR015421">
    <property type="entry name" value="PyrdxlP-dep_Trfase_major"/>
</dbReference>
<dbReference type="InterPro" id="IPR015422">
    <property type="entry name" value="PyrdxlP-dep_Trfase_small"/>
</dbReference>
<dbReference type="InterPro" id="IPR021115">
    <property type="entry name" value="Pyridoxal-P_BS"/>
</dbReference>
<dbReference type="NCBIfam" id="TIGR03812">
    <property type="entry name" value="tyr_de_CO2_Arch"/>
    <property type="match status" value="1"/>
</dbReference>
<dbReference type="PANTHER" id="PTHR42735">
    <property type="match status" value="1"/>
</dbReference>
<dbReference type="PANTHER" id="PTHR42735:SF6">
    <property type="entry name" value="SPHINGOSINE-1-PHOSPHATE LYASE 1"/>
    <property type="match status" value="1"/>
</dbReference>
<dbReference type="Pfam" id="PF00282">
    <property type="entry name" value="Pyridoxal_deC"/>
    <property type="match status" value="1"/>
</dbReference>
<dbReference type="SUPFAM" id="SSF53383">
    <property type="entry name" value="PLP-dependent transferases"/>
    <property type="match status" value="1"/>
</dbReference>
<dbReference type="PROSITE" id="PS00392">
    <property type="entry name" value="DDC_GAD_HDC_YDC"/>
    <property type="match status" value="1"/>
</dbReference>